<reference key="1">
    <citation type="journal article" date="1998" name="Science">
        <title>Genome sequence of an obligate intracellular pathogen of humans: Chlamydia trachomatis.</title>
        <authorList>
            <person name="Stephens R.S."/>
            <person name="Kalman S."/>
            <person name="Lammel C.J."/>
            <person name="Fan J."/>
            <person name="Marathe R."/>
            <person name="Aravind L."/>
            <person name="Mitchell W.P."/>
            <person name="Olinger L."/>
            <person name="Tatusov R.L."/>
            <person name="Zhao Q."/>
            <person name="Koonin E.V."/>
            <person name="Davis R.W."/>
        </authorList>
    </citation>
    <scope>NUCLEOTIDE SEQUENCE [LARGE SCALE GENOMIC DNA]</scope>
    <source>
        <strain>ATCC VR-885 / DSM 19411 / UW-3/Cx</strain>
    </source>
</reference>
<reference key="2">
    <citation type="journal article" date="2018" name="Front. Cell. Infect. Microbiol.">
        <title>The Human Centrosomal Protein CCDC146 Binds Chlamydia trachomatis Inclusion Membrane Protein CT288 and Is Recruited to the Periphery of the Chlamydia-Containing Vacuole.</title>
        <authorList>
            <person name="Almeida F."/>
            <person name="Luis M.P."/>
            <person name="Pereira I.S."/>
            <person name="Pais S.V."/>
            <person name="Mota L.J."/>
        </authorList>
    </citation>
    <scope>INTERACTION WITH HUMAN CCDC46</scope>
    <scope>SUBCELLULAR LOCATION</scope>
    <source>
        <strain>434/Bu / ATCC VR-902B</strain>
    </source>
</reference>
<reference key="3">
    <citation type="journal article" date="2023" name="Infect. Immun.">
        <title>The Chlamydia trachomatis IncM Protein Interferes with Host Cell Cytokinesis, Centrosome Positioning, and Golgi Distribution and Contributes to the Stability of the Pathogen-Containing Vacuole.</title>
        <authorList>
            <person name="Luis M.P."/>
            <person name="Pereira I.S."/>
            <person name="Bugalhao J.N."/>
            <person name="Simoes C.N."/>
            <person name="Mota C."/>
            <person name="Romao M.J."/>
            <person name="Mota L.J."/>
        </authorList>
    </citation>
    <scope>FUNCTION</scope>
    <scope>SUBCELLULAR LOCATION</scope>
    <source>
        <strain>434/Bu / ATCC VR-902B</strain>
    </source>
</reference>
<sequence>MVYFRAHQPRHTPKTFPLEVHHSFSDKHPQIAKAMRITGIALAALSLLAVVACVIAVSAGGAAIPLAVISGIAVMSGLLSAATIICSAKKALAQRKQKQLEESLPLDNATEHVSYLTSDTSYFNQWESLGALNKQLSQIDLTIQAPEKKLLKEVLGSRYDSINHSIEEISDRFTKMLSLLRLREHFYRGEERYAPYLSPPLLNKNRLLTQITSNMIRMLPKSGGVFSLKANTLSHASRTLYTVLKVALSLGVLAGVAALIIFLPPSLPFIAVIGVSSLALGMASFLMIRGIKYLLEHSPLNRKQLAKDIQKTIGPDVLASMVHYQHQLLSHLHETLLDEAITARWSEPFFIEHANLKAKIEDLTKQYDILNAAFNKSLQQDEALRSQLEKRAYLFPIPNNDENAKTKESQLLDSENDSNSEFQEIINKGLEAANKRRADAKSKFYTEDETSDKIFSIWKPTKNLALEDLWRVHEACNEEQQALLLEDYMSYKTSECQAALQKVSQELKAAQKSFAVLEKHALDRSYESSVATMDLARANQETHRLLNILSELQQLAQYLLDNH</sequence>
<dbReference type="EMBL" id="AE001273">
    <property type="protein sequence ID" value="AAC67881.1"/>
    <property type="molecule type" value="Genomic_DNA"/>
</dbReference>
<dbReference type="PIR" id="E71533">
    <property type="entry name" value="E71533"/>
</dbReference>
<dbReference type="RefSeq" id="NP_219793.1">
    <property type="nucleotide sequence ID" value="NC_000117.1"/>
</dbReference>
<dbReference type="RefSeq" id="WP_010725149.1">
    <property type="nucleotide sequence ID" value="NC_000117.1"/>
</dbReference>
<dbReference type="SMR" id="O84290"/>
<dbReference type="STRING" id="272561.CT_288"/>
<dbReference type="EnsemblBacteria" id="AAC67881">
    <property type="protein sequence ID" value="AAC67881"/>
    <property type="gene ID" value="CT_288"/>
</dbReference>
<dbReference type="GeneID" id="884832"/>
<dbReference type="KEGG" id="ctr:CT_288"/>
<dbReference type="PATRIC" id="fig|272561.5.peg.308"/>
<dbReference type="HOGENOM" id="CLU_482906_0_0_0"/>
<dbReference type="InParanoid" id="O84290"/>
<dbReference type="OrthoDB" id="19205at2"/>
<dbReference type="Proteomes" id="UP000000431">
    <property type="component" value="Chromosome"/>
</dbReference>
<dbReference type="GO" id="GO:0005576">
    <property type="term" value="C:extracellular region"/>
    <property type="evidence" value="ECO:0007669"/>
    <property type="project" value="UniProtKB-SubCell"/>
</dbReference>
<dbReference type="GO" id="GO:0033644">
    <property type="term" value="C:host cell membrane"/>
    <property type="evidence" value="ECO:0007669"/>
    <property type="project" value="UniProtKB-KW"/>
</dbReference>
<dbReference type="GO" id="GO:0140222">
    <property type="term" value="C:pathogen-containing vacuole lumen"/>
    <property type="evidence" value="ECO:0000314"/>
    <property type="project" value="UniProtKB"/>
</dbReference>
<dbReference type="GO" id="GO:0140221">
    <property type="term" value="C:pathogen-containing vacuole membrane"/>
    <property type="evidence" value="ECO:0000314"/>
    <property type="project" value="UniProtKB"/>
</dbReference>
<evidence type="ECO:0000255" key="1"/>
<evidence type="ECO:0000269" key="2">
    <source>
    </source>
</evidence>
<evidence type="ECO:0000269" key="3">
    <source>
    </source>
</evidence>
<evidence type="ECO:0000303" key="4">
    <source>
    </source>
</evidence>
<evidence type="ECO:0000305" key="5"/>
<evidence type="ECO:0000305" key="6">
    <source>
    </source>
</evidence>
<accession>O84290</accession>
<keyword id="KW-1043">Host membrane</keyword>
<keyword id="KW-0472">Membrane</keyword>
<keyword id="KW-1185">Reference proteome</keyword>
<keyword id="KW-0964">Secreted</keyword>
<keyword id="KW-0812">Transmembrane</keyword>
<keyword id="KW-1133">Transmembrane helix</keyword>
<keyword id="KW-0843">Virulence</keyword>
<proteinExistence type="evidence at protein level"/>
<protein>
    <recommendedName>
        <fullName evidence="6">Inclusion membrane protein M</fullName>
    </recommendedName>
    <alternativeName>
        <fullName evidence="4">Inc mediating multinucleation</fullName>
    </alternativeName>
</protein>
<comment type="function">
    <text evidence="3">Interferes with host cell cytokinesis, centrosome positioning and Golgi distribution, and contributes to the morphology and stability of the pathogen-containing vacuole (PubMed:36877064). May exert its effects by acting directly or indirectly on host microtubules (PubMed:36877064).</text>
</comment>
<comment type="subunit">
    <text evidence="2">Interacts with host CCDC146. In host cells infected with C.trachomatis incM, CCDC146 is recruited to the periphery of the pathogen-containing vacuole but recruitment is not dependent on incM.</text>
</comment>
<comment type="subcellular location">
    <subcellularLocation>
        <location evidence="2 3">Host vacuole</location>
        <location evidence="2 3">Host pathogen-containing vacuole</location>
        <location evidence="2 3">Host pathogen-containing vacuole membrane</location>
        <topology evidence="1">Multi-pass membrane protein</topology>
    </subcellularLocation>
    <subcellularLocation>
        <location evidence="3">Host vacuole</location>
        <location evidence="3">Host pathogen-containing vacuole</location>
        <location evidence="3">Host pathogen-containing vacuole lumen</location>
    </subcellularLocation>
    <subcellularLocation>
        <location evidence="5">Secreted</location>
    </subcellularLocation>
    <text evidence="3 5">At 12 hours post-infection (pi), detected at the vacuole membrane (PubMed:36877064). At 24 hours pi, detected at the membrane and within the vacuole (PubMed:36877064). At 40 hours pi, located predominantly within the vacuole with low levels in the membrane (PubMed:36877064). Secreted, probably by a type III secretion system (Probable).</text>
</comment>
<comment type="similarity">
    <text evidence="5">Belongs to the chlamydial CPn_0065/CT_288/TC_0561 family.</text>
</comment>
<gene>
    <name evidence="4" type="primary">incM</name>
    <name type="ordered locus">CT_288</name>
</gene>
<organism>
    <name type="scientific">Chlamydia trachomatis serovar D (strain ATCC VR-885 / DSM 19411 / UW-3/Cx)</name>
    <dbReference type="NCBI Taxonomy" id="272561"/>
    <lineage>
        <taxon>Bacteria</taxon>
        <taxon>Pseudomonadati</taxon>
        <taxon>Chlamydiota</taxon>
        <taxon>Chlamydiia</taxon>
        <taxon>Chlamydiales</taxon>
        <taxon>Chlamydiaceae</taxon>
        <taxon>Chlamydia/Chlamydophila group</taxon>
        <taxon>Chlamydia</taxon>
    </lineage>
</organism>
<feature type="chain" id="PRO_0000218353" description="Inclusion membrane protein M">
    <location>
        <begin position="1"/>
        <end position="563"/>
    </location>
</feature>
<feature type="topological domain" description="Cytoplasmic" evidence="5">
    <location>
        <begin position="1"/>
        <end position="36"/>
    </location>
</feature>
<feature type="transmembrane region" description="Helical" evidence="1">
    <location>
        <begin position="37"/>
        <end position="57"/>
    </location>
</feature>
<feature type="topological domain" description="Vacuolar" evidence="5">
    <location>
        <position position="58"/>
    </location>
</feature>
<feature type="transmembrane region" description="Helical" evidence="1">
    <location>
        <begin position="59"/>
        <end position="79"/>
    </location>
</feature>
<feature type="topological domain" description="Cytoplasmic" evidence="5">
    <location>
        <begin position="80"/>
        <end position="252"/>
    </location>
</feature>
<feature type="transmembrane region" description="Helical" evidence="1">
    <location>
        <begin position="253"/>
        <end position="273"/>
    </location>
</feature>
<feature type="topological domain" description="Vacuolar" evidence="5">
    <location>
        <position position="274"/>
    </location>
</feature>
<feature type="transmembrane region" description="Helical" evidence="1">
    <location>
        <begin position="275"/>
        <end position="295"/>
    </location>
</feature>
<feature type="topological domain" description="Cytoplasmic" evidence="5">
    <location>
        <begin position="296"/>
        <end position="563"/>
    </location>
</feature>
<name>INCM_CHLTR</name>